<evidence type="ECO:0000250" key="1"/>
<evidence type="ECO:0000255" key="2"/>
<evidence type="ECO:0000256" key="3">
    <source>
        <dbReference type="SAM" id="MobiDB-lite"/>
    </source>
</evidence>
<evidence type="ECO:0000305" key="4"/>
<comment type="function">
    <text evidence="1">One gap junction consists of a cluster of closely packed pairs of transmembrane channels, the connexons, through which materials of low MW diffuse from one cell to a neighboring cell.</text>
</comment>
<comment type="subunit">
    <text evidence="1">A connexon is composed of a hexamer of connexins.</text>
</comment>
<comment type="subcellular location">
    <subcellularLocation>
        <location evidence="1">Cell membrane</location>
        <topology evidence="1">Multi-pass membrane protein</topology>
    </subcellularLocation>
    <subcellularLocation>
        <location evidence="1">Cell junction</location>
        <location evidence="1">Gap junction</location>
    </subcellularLocation>
</comment>
<comment type="similarity">
    <text evidence="4">Belongs to the connexin family. Alpha-type (group II) subfamily.</text>
</comment>
<reference key="1">
    <citation type="submission" date="2006-08" db="EMBL/GenBank/DDBJ databases">
        <authorList>
            <consortium name="NIH - Xenopus Gene Collection (XGC) project"/>
        </authorList>
    </citation>
    <scope>NUCLEOTIDE SEQUENCE [LARGE SCALE MRNA]</scope>
    <source>
        <strain>N6</strain>
        <tissue>Oviduct</tissue>
    </source>
</reference>
<name>CXA4_XENTR</name>
<proteinExistence type="evidence at transcript level"/>
<accession>Q0V990</accession>
<protein>
    <recommendedName>
        <fullName>Gap junction alpha-4 protein</fullName>
    </recommendedName>
    <alternativeName>
        <fullName>Connexin-41</fullName>
        <shortName>Cx41</shortName>
    </alternativeName>
</protein>
<dbReference type="EMBL" id="BC121698">
    <property type="protein sequence ID" value="AAI21699.1"/>
    <property type="molecule type" value="mRNA"/>
</dbReference>
<dbReference type="RefSeq" id="NP_001072904.1">
    <property type="nucleotide sequence ID" value="NM_001079436.1"/>
</dbReference>
<dbReference type="SMR" id="Q0V990"/>
<dbReference type="FunCoup" id="Q0V990">
    <property type="interactions" value="14"/>
</dbReference>
<dbReference type="STRING" id="8364.ENSXETP00000029243"/>
<dbReference type="PaxDb" id="8364-ENSXETP00000056254"/>
<dbReference type="DNASU" id="780366"/>
<dbReference type="GeneID" id="780366"/>
<dbReference type="KEGG" id="xtr:780366"/>
<dbReference type="AGR" id="Xenbase:XB-GENE-977956"/>
<dbReference type="CTD" id="2701"/>
<dbReference type="Xenbase" id="XB-GENE-977956">
    <property type="gene designation" value="gja4"/>
</dbReference>
<dbReference type="eggNOG" id="ENOG502QU20">
    <property type="taxonomic scope" value="Eukaryota"/>
</dbReference>
<dbReference type="HOGENOM" id="CLU_037388_4_2_1"/>
<dbReference type="InParanoid" id="Q0V990"/>
<dbReference type="OMA" id="YPKNEDT"/>
<dbReference type="OrthoDB" id="9993956at2759"/>
<dbReference type="PhylomeDB" id="Q0V990"/>
<dbReference type="TreeFam" id="TF329606"/>
<dbReference type="Reactome" id="R-XTR-190861">
    <property type="pathway name" value="Gap junction assembly"/>
</dbReference>
<dbReference type="Proteomes" id="UP000008143">
    <property type="component" value="Chromosome 2"/>
</dbReference>
<dbReference type="Bgee" id="ENSXETG00000026789">
    <property type="expression patterns" value="Expressed in skeletal muscle tissue and 11 other cell types or tissues"/>
</dbReference>
<dbReference type="GO" id="GO:0005922">
    <property type="term" value="C:connexin complex"/>
    <property type="evidence" value="ECO:0007669"/>
    <property type="project" value="InterPro"/>
</dbReference>
<dbReference type="GO" id="GO:0007154">
    <property type="term" value="P:cell communication"/>
    <property type="evidence" value="ECO:0007669"/>
    <property type="project" value="InterPro"/>
</dbReference>
<dbReference type="FunFam" id="1.20.1440.80:FF:000001">
    <property type="entry name" value="Gap junction alpha-1"/>
    <property type="match status" value="1"/>
</dbReference>
<dbReference type="Gene3D" id="1.20.1440.80">
    <property type="entry name" value="Gap junction channel protein cysteine-rich domain"/>
    <property type="match status" value="1"/>
</dbReference>
<dbReference type="InterPro" id="IPR000500">
    <property type="entry name" value="Connexin"/>
</dbReference>
<dbReference type="InterPro" id="IPR034634">
    <property type="entry name" value="Connexin_C"/>
</dbReference>
<dbReference type="InterPro" id="IPR019570">
    <property type="entry name" value="Connexin_CCC"/>
</dbReference>
<dbReference type="InterPro" id="IPR017990">
    <property type="entry name" value="Connexin_CS"/>
</dbReference>
<dbReference type="InterPro" id="IPR013092">
    <property type="entry name" value="Connexin_N"/>
</dbReference>
<dbReference type="InterPro" id="IPR038359">
    <property type="entry name" value="Connexin_N_sf"/>
</dbReference>
<dbReference type="PANTHER" id="PTHR11984">
    <property type="entry name" value="CONNEXIN"/>
    <property type="match status" value="1"/>
</dbReference>
<dbReference type="PANTHER" id="PTHR11984:SF54">
    <property type="entry name" value="GAP JUNCTION ALPHA-4 PROTEIN"/>
    <property type="match status" value="1"/>
</dbReference>
<dbReference type="Pfam" id="PF00029">
    <property type="entry name" value="Connexin"/>
    <property type="match status" value="1"/>
</dbReference>
<dbReference type="PRINTS" id="PR00206">
    <property type="entry name" value="CONNEXIN"/>
</dbReference>
<dbReference type="SMART" id="SM00037">
    <property type="entry name" value="CNX"/>
    <property type="match status" value="1"/>
</dbReference>
<dbReference type="SMART" id="SM01089">
    <property type="entry name" value="Connexin_CCC"/>
    <property type="match status" value="1"/>
</dbReference>
<dbReference type="SUPFAM" id="SSF118220">
    <property type="entry name" value="Connexin43"/>
    <property type="match status" value="1"/>
</dbReference>
<dbReference type="PROSITE" id="PS00407">
    <property type="entry name" value="CONNEXINS_1"/>
    <property type="match status" value="1"/>
</dbReference>
<dbReference type="PROSITE" id="PS00408">
    <property type="entry name" value="CONNEXINS_2"/>
    <property type="match status" value="1"/>
</dbReference>
<sequence length="352" mass="40626">MGDWEFLEKLLDQVQEHSTSIGKIWLMVLFIFRILILGLAGESVWGDEQSDFICNTEQPGCTNVCYDKAFPISHVRYWVLQFLFVSTPTLFYLGHVIYLSRREEKLKQKESELRALDDKEQVEQAIAIIEKKKMKLYIQEDGTVKIKGALMCTYLTSVIFKSLFEAGFLLGQWYLYGFVMTPIYVCERVPCPHKVDCFVSRPMEKTIFIVFMLVVSLISLFLNVLELIHLVCKSMIDTLKKYSPYVPPNRYPKNEDTYPEKTSETATAPFQDKSYIYLPMNDNISYPQYKMPNEQNWANFNTEHQLAISGNNQSPLGHYSLSAFVPVPPKTHSTMEKPSTRASSSASKKQYV</sequence>
<organism>
    <name type="scientific">Xenopus tropicalis</name>
    <name type="common">Western clawed frog</name>
    <name type="synonym">Silurana tropicalis</name>
    <dbReference type="NCBI Taxonomy" id="8364"/>
    <lineage>
        <taxon>Eukaryota</taxon>
        <taxon>Metazoa</taxon>
        <taxon>Chordata</taxon>
        <taxon>Craniata</taxon>
        <taxon>Vertebrata</taxon>
        <taxon>Euteleostomi</taxon>
        <taxon>Amphibia</taxon>
        <taxon>Batrachia</taxon>
        <taxon>Anura</taxon>
        <taxon>Pipoidea</taxon>
        <taxon>Pipidae</taxon>
        <taxon>Xenopodinae</taxon>
        <taxon>Xenopus</taxon>
        <taxon>Silurana</taxon>
    </lineage>
</organism>
<gene>
    <name type="primary">gja4</name>
</gene>
<keyword id="KW-0965">Cell junction</keyword>
<keyword id="KW-1003">Cell membrane</keyword>
<keyword id="KW-0303">Gap junction</keyword>
<keyword id="KW-0472">Membrane</keyword>
<keyword id="KW-1185">Reference proteome</keyword>
<keyword id="KW-0812">Transmembrane</keyword>
<keyword id="KW-1133">Transmembrane helix</keyword>
<feature type="initiator methionine" description="Removed" evidence="1">
    <location>
        <position position="1"/>
    </location>
</feature>
<feature type="chain" id="PRO_0000313012" description="Gap junction alpha-4 protein">
    <location>
        <begin position="2"/>
        <end position="352"/>
    </location>
</feature>
<feature type="topological domain" description="Cytoplasmic" evidence="2">
    <location>
        <begin position="2"/>
        <end position="23"/>
    </location>
</feature>
<feature type="transmembrane region" description="Helical" evidence="2">
    <location>
        <begin position="24"/>
        <end position="46"/>
    </location>
</feature>
<feature type="topological domain" description="Extracellular" evidence="2">
    <location>
        <begin position="47"/>
        <end position="76"/>
    </location>
</feature>
<feature type="transmembrane region" description="Helical" evidence="2">
    <location>
        <begin position="77"/>
        <end position="99"/>
    </location>
</feature>
<feature type="topological domain" description="Cytoplasmic" evidence="2">
    <location>
        <begin position="100"/>
        <end position="153"/>
    </location>
</feature>
<feature type="transmembrane region" description="Helical" evidence="2">
    <location>
        <begin position="154"/>
        <end position="176"/>
    </location>
</feature>
<feature type="topological domain" description="Extracellular" evidence="2">
    <location>
        <begin position="177"/>
        <end position="208"/>
    </location>
</feature>
<feature type="transmembrane region" description="Helical" evidence="2">
    <location>
        <begin position="209"/>
        <end position="231"/>
    </location>
</feature>
<feature type="topological domain" description="Cytoplasmic" evidence="2">
    <location>
        <begin position="232"/>
        <end position="352"/>
    </location>
</feature>
<feature type="region of interest" description="Disordered" evidence="3">
    <location>
        <begin position="330"/>
        <end position="352"/>
    </location>
</feature>
<feature type="compositionally biased region" description="Polar residues" evidence="3">
    <location>
        <begin position="340"/>
        <end position="352"/>
    </location>
</feature>